<comment type="function">
    <text evidence="1">Putative transcription factor.</text>
</comment>
<comment type="subcellular location">
    <subcellularLocation>
        <location evidence="2">Nucleus</location>
    </subcellularLocation>
</comment>
<keyword id="KW-0175">Coiled coil</keyword>
<keyword id="KW-0217">Developmental protein</keyword>
<keyword id="KW-0238">DNA-binding</keyword>
<keyword id="KW-0371">Homeobox</keyword>
<keyword id="KW-0539">Nucleus</keyword>
<keyword id="KW-1185">Reference proteome</keyword>
<keyword id="KW-0677">Repeat</keyword>
<keyword id="KW-0804">Transcription</keyword>
<keyword id="KW-0805">Transcription regulation</keyword>
<protein>
    <recommendedName>
        <fullName>Homeobox protein 7</fullName>
        <shortName>DdHbx-7</shortName>
    </recommendedName>
</protein>
<evidence type="ECO:0000250" key="1"/>
<evidence type="ECO:0000255" key="2">
    <source>
        <dbReference type="PROSITE-ProRule" id="PRU00108"/>
    </source>
</evidence>
<evidence type="ECO:0000256" key="3">
    <source>
        <dbReference type="SAM" id="MobiDB-lite"/>
    </source>
</evidence>
<dbReference type="EMBL" id="AAFI02000023">
    <property type="protein sequence ID" value="EAL68285.1"/>
    <property type="molecule type" value="Genomic_DNA"/>
</dbReference>
<dbReference type="RefSeq" id="XP_642221.1">
    <property type="nucleotide sequence ID" value="XM_637129.1"/>
</dbReference>
<dbReference type="SMR" id="Q54YI1"/>
<dbReference type="FunCoup" id="Q54YI1">
    <property type="interactions" value="877"/>
</dbReference>
<dbReference type="PaxDb" id="44689-DDB0220483"/>
<dbReference type="EnsemblProtists" id="EAL68285">
    <property type="protein sequence ID" value="EAL68285"/>
    <property type="gene ID" value="DDB_G0278225"/>
</dbReference>
<dbReference type="GeneID" id="8621429"/>
<dbReference type="KEGG" id="ddi:DDB_G0278225"/>
<dbReference type="dictyBase" id="DDB_G0278225">
    <property type="gene designation" value="hbx7"/>
</dbReference>
<dbReference type="VEuPathDB" id="AmoebaDB:DDB_G0278225"/>
<dbReference type="eggNOG" id="ENOG502RIPN">
    <property type="taxonomic scope" value="Eukaryota"/>
</dbReference>
<dbReference type="HOGENOM" id="CLU_2594807_0_0_1"/>
<dbReference type="InParanoid" id="Q54YI1"/>
<dbReference type="OMA" id="DTRMNIR"/>
<dbReference type="PRO" id="PR:Q54YI1"/>
<dbReference type="Proteomes" id="UP000002195">
    <property type="component" value="Chromosome 3"/>
</dbReference>
<dbReference type="GO" id="GO:0005634">
    <property type="term" value="C:nucleus"/>
    <property type="evidence" value="ECO:0007669"/>
    <property type="project" value="UniProtKB-SubCell"/>
</dbReference>
<dbReference type="GO" id="GO:0003677">
    <property type="term" value="F:DNA binding"/>
    <property type="evidence" value="ECO:0007669"/>
    <property type="project" value="UniProtKB-KW"/>
</dbReference>
<dbReference type="CDD" id="cd00086">
    <property type="entry name" value="homeodomain"/>
    <property type="match status" value="1"/>
</dbReference>
<dbReference type="Gene3D" id="1.10.10.60">
    <property type="entry name" value="Homeodomain-like"/>
    <property type="match status" value="1"/>
</dbReference>
<dbReference type="InterPro" id="IPR001356">
    <property type="entry name" value="HD"/>
</dbReference>
<dbReference type="InterPro" id="IPR009057">
    <property type="entry name" value="Homeodomain-like_sf"/>
</dbReference>
<dbReference type="Pfam" id="PF00046">
    <property type="entry name" value="Homeodomain"/>
    <property type="match status" value="1"/>
</dbReference>
<dbReference type="SMART" id="SM00389">
    <property type="entry name" value="HOX"/>
    <property type="match status" value="1"/>
</dbReference>
<dbReference type="SUPFAM" id="SSF46689">
    <property type="entry name" value="Homeodomain-like"/>
    <property type="match status" value="1"/>
</dbReference>
<dbReference type="PROSITE" id="PS50071">
    <property type="entry name" value="HOMEOBOX_2"/>
    <property type="match status" value="1"/>
</dbReference>
<gene>
    <name type="primary">hbx7</name>
    <name type="ORF">DDB_G0278225</name>
</gene>
<reference key="1">
    <citation type="journal article" date="2005" name="Nature">
        <title>The genome of the social amoeba Dictyostelium discoideum.</title>
        <authorList>
            <person name="Eichinger L."/>
            <person name="Pachebat J.A."/>
            <person name="Gloeckner G."/>
            <person name="Rajandream M.A."/>
            <person name="Sucgang R."/>
            <person name="Berriman M."/>
            <person name="Song J."/>
            <person name="Olsen R."/>
            <person name="Szafranski K."/>
            <person name="Xu Q."/>
            <person name="Tunggal B."/>
            <person name="Kummerfeld S."/>
            <person name="Madera M."/>
            <person name="Konfortov B.A."/>
            <person name="Rivero F."/>
            <person name="Bankier A.T."/>
            <person name="Lehmann R."/>
            <person name="Hamlin N."/>
            <person name="Davies R."/>
            <person name="Gaudet P."/>
            <person name="Fey P."/>
            <person name="Pilcher K."/>
            <person name="Chen G."/>
            <person name="Saunders D."/>
            <person name="Sodergren E.J."/>
            <person name="Davis P."/>
            <person name="Kerhornou A."/>
            <person name="Nie X."/>
            <person name="Hall N."/>
            <person name="Anjard C."/>
            <person name="Hemphill L."/>
            <person name="Bason N."/>
            <person name="Farbrother P."/>
            <person name="Desany B."/>
            <person name="Just E."/>
            <person name="Morio T."/>
            <person name="Rost R."/>
            <person name="Churcher C.M."/>
            <person name="Cooper J."/>
            <person name="Haydock S."/>
            <person name="van Driessche N."/>
            <person name="Cronin A."/>
            <person name="Goodhead I."/>
            <person name="Muzny D.M."/>
            <person name="Mourier T."/>
            <person name="Pain A."/>
            <person name="Lu M."/>
            <person name="Harper D."/>
            <person name="Lindsay R."/>
            <person name="Hauser H."/>
            <person name="James K.D."/>
            <person name="Quiles M."/>
            <person name="Madan Babu M."/>
            <person name="Saito T."/>
            <person name="Buchrieser C."/>
            <person name="Wardroper A."/>
            <person name="Felder M."/>
            <person name="Thangavelu M."/>
            <person name="Johnson D."/>
            <person name="Knights A."/>
            <person name="Loulseged H."/>
            <person name="Mungall K.L."/>
            <person name="Oliver K."/>
            <person name="Price C."/>
            <person name="Quail M.A."/>
            <person name="Urushihara H."/>
            <person name="Hernandez J."/>
            <person name="Rabbinowitsch E."/>
            <person name="Steffen D."/>
            <person name="Sanders M."/>
            <person name="Ma J."/>
            <person name="Kohara Y."/>
            <person name="Sharp S."/>
            <person name="Simmonds M.N."/>
            <person name="Spiegler S."/>
            <person name="Tivey A."/>
            <person name="Sugano S."/>
            <person name="White B."/>
            <person name="Walker D."/>
            <person name="Woodward J.R."/>
            <person name="Winckler T."/>
            <person name="Tanaka Y."/>
            <person name="Shaulsky G."/>
            <person name="Schleicher M."/>
            <person name="Weinstock G.M."/>
            <person name="Rosenthal A."/>
            <person name="Cox E.C."/>
            <person name="Chisholm R.L."/>
            <person name="Gibbs R.A."/>
            <person name="Loomis W.F."/>
            <person name="Platzer M."/>
            <person name="Kay R.R."/>
            <person name="Williams J.G."/>
            <person name="Dear P.H."/>
            <person name="Noegel A.A."/>
            <person name="Barrell B.G."/>
            <person name="Kuspa A."/>
        </authorList>
    </citation>
    <scope>NUCLEOTIDE SEQUENCE [LARGE SCALE GENOMIC DNA]</scope>
    <source>
        <strain>AX4</strain>
    </source>
</reference>
<feature type="chain" id="PRO_0000388791" description="Homeobox protein 7">
    <location>
        <begin position="1"/>
        <end position="80"/>
    </location>
</feature>
<feature type="DNA-binding region" description="Homeobox" evidence="2">
    <location>
        <begin position="8"/>
        <end position="67"/>
    </location>
</feature>
<feature type="region of interest" description="Disordered" evidence="3">
    <location>
        <begin position="60"/>
        <end position="80"/>
    </location>
</feature>
<feature type="compositionally biased region" description="Low complexity" evidence="3">
    <location>
        <begin position="70"/>
        <end position="80"/>
    </location>
</feature>
<organism>
    <name type="scientific">Dictyostelium discoideum</name>
    <name type="common">Social amoeba</name>
    <dbReference type="NCBI Taxonomy" id="44689"/>
    <lineage>
        <taxon>Eukaryota</taxon>
        <taxon>Amoebozoa</taxon>
        <taxon>Evosea</taxon>
        <taxon>Eumycetozoa</taxon>
        <taxon>Dictyostelia</taxon>
        <taxon>Dictyosteliales</taxon>
        <taxon>Dictyosteliaceae</taxon>
        <taxon>Dictyostelium</taxon>
    </lineage>
</organism>
<accession>Q54YI1</accession>
<sequence length="80" mass="9658">MIKDFNESNIRNIRSSGISTKKLEDFFSINQYPNKNEIKDFANYYQCDETKIKNWFKGKRDRLKKKSSNNEKSGNKFYFK</sequence>
<proteinExistence type="inferred from homology"/>
<name>HBX7_DICDI</name>